<evidence type="ECO:0000255" key="1"/>
<evidence type="ECO:0000269" key="2">
    <source>
    </source>
</evidence>
<evidence type="ECO:0000269" key="3">
    <source>
    </source>
</evidence>
<evidence type="ECO:0000269" key="4">
    <source>
    </source>
</evidence>
<evidence type="ECO:0000269" key="5">
    <source>
    </source>
</evidence>
<evidence type="ECO:0000269" key="6">
    <source>
    </source>
</evidence>
<evidence type="ECO:0000305" key="7"/>
<gene>
    <name type="primary">IPT4</name>
    <name type="ordered locus">At4g24650</name>
    <name type="ORF">F22K18.150</name>
</gene>
<organism>
    <name type="scientific">Arabidopsis thaliana</name>
    <name type="common">Mouse-ear cress</name>
    <dbReference type="NCBI Taxonomy" id="3702"/>
    <lineage>
        <taxon>Eukaryota</taxon>
        <taxon>Viridiplantae</taxon>
        <taxon>Streptophyta</taxon>
        <taxon>Embryophyta</taxon>
        <taxon>Tracheophyta</taxon>
        <taxon>Spermatophyta</taxon>
        <taxon>Magnoliopsida</taxon>
        <taxon>eudicotyledons</taxon>
        <taxon>Gunneridae</taxon>
        <taxon>Pentapetalae</taxon>
        <taxon>rosids</taxon>
        <taxon>malvids</taxon>
        <taxon>Brassicales</taxon>
        <taxon>Brassicaceae</taxon>
        <taxon>Camelineae</taxon>
        <taxon>Arabidopsis</taxon>
    </lineage>
</organism>
<comment type="function">
    <text evidence="5 6">Involved in cytokinin biosynthesis. Catalyzes the transfer of an isopentenyl group from dimethylallyl diphosphate (DMAPP) to ATP and ADP, but not to AMP. Has no DMAPP:tRNA isopentenyltransferase activity.</text>
</comment>
<comment type="catalytic activity">
    <reaction evidence="2">
        <text>dimethylallyl diphosphate + ADP = N(6)-(dimethylallyl)adenosine 5'-diphosphate + diphosphate</text>
        <dbReference type="Rhea" id="RHEA:36327"/>
        <dbReference type="ChEBI" id="CHEBI:33019"/>
        <dbReference type="ChEBI" id="CHEBI:57623"/>
        <dbReference type="ChEBI" id="CHEBI:73533"/>
        <dbReference type="ChEBI" id="CHEBI:456216"/>
        <dbReference type="EC" id="2.5.1.112"/>
    </reaction>
</comment>
<comment type="catalytic activity">
    <reaction evidence="2">
        <text>dimethylallyl diphosphate + ATP = N(6)-(dimethylallyl)adenosine 5'-triphosphate + diphosphate</text>
        <dbReference type="Rhea" id="RHEA:36331"/>
        <dbReference type="ChEBI" id="CHEBI:30616"/>
        <dbReference type="ChEBI" id="CHEBI:33019"/>
        <dbReference type="ChEBI" id="CHEBI:57623"/>
        <dbReference type="ChEBI" id="CHEBI:73532"/>
        <dbReference type="EC" id="2.5.1.112"/>
    </reaction>
</comment>
<comment type="cofactor">
    <cofactor>
        <name>Mg(2+)</name>
        <dbReference type="ChEBI" id="CHEBI:18420"/>
    </cofactor>
</comment>
<comment type="biophysicochemical properties">
    <kinetics>
        <KM evidence="2">18 uM for ATP</KM>
        <KM evidence="2">6.5 uM for DMAPP</KM>
        <Vmax evidence="2">0.22 umol/min/mg enzyme</Vmax>
    </kinetics>
</comment>
<comment type="interaction">
    <interactant intactId="EBI-25522816">
        <id>Q9SB60</id>
    </interactant>
    <interactant intactId="EBI-963624">
        <id>Q9SLH3</id>
        <label>RGA</label>
    </interactant>
    <organismsDiffer>false</organismsDiffer>
    <experiments>3</experiments>
</comment>
<comment type="subcellular location">
    <subcellularLocation>
        <location evidence="4">Cytoplasm</location>
    </subcellularLocation>
</comment>
<comment type="tissue specificity">
    <text evidence="3">Expressed in immature seeds with highest expression in the chalazal endosperm.</text>
</comment>
<comment type="developmental stage">
    <text evidence="3">Expressed at the early stages of embryo development, up to the early heart stage.</text>
</comment>
<comment type="disruption phenotype">
    <text evidence="6">No visible phenotype, due the redundancy with other IPTs.</text>
</comment>
<comment type="similarity">
    <text evidence="7">Belongs to the IPP transferase family.</text>
</comment>
<reference key="1">
    <citation type="journal article" date="2001" name="J. Biol. Chem.">
        <title>Identification of genes encoding adenylate isopentenyltransferase, a cytokinin biosynthesis enzyme, in Arabidopsis thaliana.</title>
        <authorList>
            <person name="Takei K."/>
            <person name="Sakakibara H."/>
            <person name="Sugiyama T."/>
        </authorList>
    </citation>
    <scope>NUCLEOTIDE SEQUENCE [MRNA]</scope>
    <scope>GENE FAMILY</scope>
    <source>
        <strain>cv. Columbia</strain>
    </source>
</reference>
<reference key="2">
    <citation type="journal article" date="2001" name="Plant Cell Physiol.">
        <title>Identification of plant cytokinin biosynthetic enzymes as dimethylallyl diphosphate:ATP/ADP isopentenyltransferases.</title>
        <authorList>
            <person name="Kakimoto T."/>
        </authorList>
    </citation>
    <scope>NUCLEOTIDE SEQUENCE [MRNA]</scope>
    <scope>BIOPHYSICOCHEMICAL PROPERTIES</scope>
    <scope>CATALYTIC ACTIVITY</scope>
    <scope>GENE FAMILY</scope>
    <source>
        <strain>cv. Wassilewskija</strain>
    </source>
</reference>
<reference key="3">
    <citation type="journal article" date="1999" name="Nature">
        <title>Sequence and analysis of chromosome 4 of the plant Arabidopsis thaliana.</title>
        <authorList>
            <person name="Mayer K.F.X."/>
            <person name="Schueller C."/>
            <person name="Wambutt R."/>
            <person name="Murphy G."/>
            <person name="Volckaert G."/>
            <person name="Pohl T."/>
            <person name="Duesterhoeft A."/>
            <person name="Stiekema W."/>
            <person name="Entian K.-D."/>
            <person name="Terryn N."/>
            <person name="Harris B."/>
            <person name="Ansorge W."/>
            <person name="Brandt P."/>
            <person name="Grivell L.A."/>
            <person name="Rieger M."/>
            <person name="Weichselgartner M."/>
            <person name="de Simone V."/>
            <person name="Obermaier B."/>
            <person name="Mache R."/>
            <person name="Mueller M."/>
            <person name="Kreis M."/>
            <person name="Delseny M."/>
            <person name="Puigdomenech P."/>
            <person name="Watson M."/>
            <person name="Schmidtheini T."/>
            <person name="Reichert B."/>
            <person name="Portetelle D."/>
            <person name="Perez-Alonso M."/>
            <person name="Boutry M."/>
            <person name="Bancroft I."/>
            <person name="Vos P."/>
            <person name="Hoheisel J."/>
            <person name="Zimmermann W."/>
            <person name="Wedler H."/>
            <person name="Ridley P."/>
            <person name="Langham S.-A."/>
            <person name="McCullagh B."/>
            <person name="Bilham L."/>
            <person name="Robben J."/>
            <person name="van der Schueren J."/>
            <person name="Grymonprez B."/>
            <person name="Chuang Y.-J."/>
            <person name="Vandenbussche F."/>
            <person name="Braeken M."/>
            <person name="Weltjens I."/>
            <person name="Voet M."/>
            <person name="Bastiaens I."/>
            <person name="Aert R."/>
            <person name="Defoor E."/>
            <person name="Weitzenegger T."/>
            <person name="Bothe G."/>
            <person name="Ramsperger U."/>
            <person name="Hilbert H."/>
            <person name="Braun M."/>
            <person name="Holzer E."/>
            <person name="Brandt A."/>
            <person name="Peters S."/>
            <person name="van Staveren M."/>
            <person name="Dirkse W."/>
            <person name="Mooijman P."/>
            <person name="Klein Lankhorst R."/>
            <person name="Rose M."/>
            <person name="Hauf J."/>
            <person name="Koetter P."/>
            <person name="Berneiser S."/>
            <person name="Hempel S."/>
            <person name="Feldpausch M."/>
            <person name="Lamberth S."/>
            <person name="Van den Daele H."/>
            <person name="De Keyser A."/>
            <person name="Buysshaert C."/>
            <person name="Gielen J."/>
            <person name="Villarroel R."/>
            <person name="De Clercq R."/>
            <person name="van Montagu M."/>
            <person name="Rogers J."/>
            <person name="Cronin A."/>
            <person name="Quail M.A."/>
            <person name="Bray-Allen S."/>
            <person name="Clark L."/>
            <person name="Doggett J."/>
            <person name="Hall S."/>
            <person name="Kay M."/>
            <person name="Lennard N."/>
            <person name="McLay K."/>
            <person name="Mayes R."/>
            <person name="Pettett A."/>
            <person name="Rajandream M.A."/>
            <person name="Lyne M."/>
            <person name="Benes V."/>
            <person name="Rechmann S."/>
            <person name="Borkova D."/>
            <person name="Bloecker H."/>
            <person name="Scharfe M."/>
            <person name="Grimm M."/>
            <person name="Loehnert T.-H."/>
            <person name="Dose S."/>
            <person name="de Haan M."/>
            <person name="Maarse A.C."/>
            <person name="Schaefer M."/>
            <person name="Mueller-Auer S."/>
            <person name="Gabel C."/>
            <person name="Fuchs M."/>
            <person name="Fartmann B."/>
            <person name="Granderath K."/>
            <person name="Dauner D."/>
            <person name="Herzl A."/>
            <person name="Neumann S."/>
            <person name="Argiriou A."/>
            <person name="Vitale D."/>
            <person name="Liguori R."/>
            <person name="Piravandi E."/>
            <person name="Massenet O."/>
            <person name="Quigley F."/>
            <person name="Clabauld G."/>
            <person name="Muendlein A."/>
            <person name="Felber R."/>
            <person name="Schnabl S."/>
            <person name="Hiller R."/>
            <person name="Schmidt W."/>
            <person name="Lecharny A."/>
            <person name="Aubourg S."/>
            <person name="Chefdor F."/>
            <person name="Cooke R."/>
            <person name="Berger C."/>
            <person name="Monfort A."/>
            <person name="Casacuberta E."/>
            <person name="Gibbons T."/>
            <person name="Weber N."/>
            <person name="Vandenbol M."/>
            <person name="Bargues M."/>
            <person name="Terol J."/>
            <person name="Torres A."/>
            <person name="Perez-Perez A."/>
            <person name="Purnelle B."/>
            <person name="Bent E."/>
            <person name="Johnson S."/>
            <person name="Tacon D."/>
            <person name="Jesse T."/>
            <person name="Heijnen L."/>
            <person name="Schwarz S."/>
            <person name="Scholler P."/>
            <person name="Heber S."/>
            <person name="Francs P."/>
            <person name="Bielke C."/>
            <person name="Frishman D."/>
            <person name="Haase D."/>
            <person name="Lemcke K."/>
            <person name="Mewes H.-W."/>
            <person name="Stocker S."/>
            <person name="Zaccaria P."/>
            <person name="Bevan M."/>
            <person name="Wilson R.K."/>
            <person name="de la Bastide M."/>
            <person name="Habermann K."/>
            <person name="Parnell L."/>
            <person name="Dedhia N."/>
            <person name="Gnoj L."/>
            <person name="Schutz K."/>
            <person name="Huang E."/>
            <person name="Spiegel L."/>
            <person name="Sekhon M."/>
            <person name="Murray J."/>
            <person name="Sheet P."/>
            <person name="Cordes M."/>
            <person name="Abu-Threideh J."/>
            <person name="Stoneking T."/>
            <person name="Kalicki J."/>
            <person name="Graves T."/>
            <person name="Harmon G."/>
            <person name="Edwards J."/>
            <person name="Latreille P."/>
            <person name="Courtney L."/>
            <person name="Cloud J."/>
            <person name="Abbott A."/>
            <person name="Scott K."/>
            <person name="Johnson D."/>
            <person name="Minx P."/>
            <person name="Bentley D."/>
            <person name="Fulton B."/>
            <person name="Miller N."/>
            <person name="Greco T."/>
            <person name="Kemp K."/>
            <person name="Kramer J."/>
            <person name="Fulton L."/>
            <person name="Mardis E."/>
            <person name="Dante M."/>
            <person name="Pepin K."/>
            <person name="Hillier L.W."/>
            <person name="Nelson J."/>
            <person name="Spieth J."/>
            <person name="Ryan E."/>
            <person name="Andrews S."/>
            <person name="Geisel C."/>
            <person name="Layman D."/>
            <person name="Du H."/>
            <person name="Ali J."/>
            <person name="Berghoff A."/>
            <person name="Jones K."/>
            <person name="Drone K."/>
            <person name="Cotton M."/>
            <person name="Joshu C."/>
            <person name="Antonoiu B."/>
            <person name="Zidanic M."/>
            <person name="Strong C."/>
            <person name="Sun H."/>
            <person name="Lamar B."/>
            <person name="Yordan C."/>
            <person name="Ma P."/>
            <person name="Zhong J."/>
            <person name="Preston R."/>
            <person name="Vil D."/>
            <person name="Shekher M."/>
            <person name="Matero A."/>
            <person name="Shah R."/>
            <person name="Swaby I.K."/>
            <person name="O'Shaughnessy A."/>
            <person name="Rodriguez M."/>
            <person name="Hoffman J."/>
            <person name="Till S."/>
            <person name="Granat S."/>
            <person name="Shohdy N."/>
            <person name="Hasegawa A."/>
            <person name="Hameed A."/>
            <person name="Lodhi M."/>
            <person name="Johnson A."/>
            <person name="Chen E."/>
            <person name="Marra M.A."/>
            <person name="Martienssen R."/>
            <person name="McCombie W.R."/>
        </authorList>
    </citation>
    <scope>NUCLEOTIDE SEQUENCE [LARGE SCALE GENOMIC DNA]</scope>
    <source>
        <strain>cv. Columbia</strain>
    </source>
</reference>
<reference key="4">
    <citation type="journal article" date="2017" name="Plant J.">
        <title>Araport11: a complete reannotation of the Arabidopsis thaliana reference genome.</title>
        <authorList>
            <person name="Cheng C.Y."/>
            <person name="Krishnakumar V."/>
            <person name="Chan A.P."/>
            <person name="Thibaud-Nissen F."/>
            <person name="Schobel S."/>
            <person name="Town C.D."/>
        </authorList>
    </citation>
    <scope>GENOME REANNOTATION</scope>
    <source>
        <strain>cv. Columbia</strain>
    </source>
</reference>
<reference key="5">
    <citation type="journal article" date="2004" name="J. Biol. Chem.">
        <title>Distinct isoprenoid origins of cis- and trans-zeatin biosyntheses in Arabidopsis.</title>
        <authorList>
            <person name="Kasahara H."/>
            <person name="Takei K."/>
            <person name="Ueda N."/>
            <person name="Hishiyama S."/>
            <person name="Yamaya T."/>
            <person name="Kamiya Y."/>
            <person name="Yamaguchi S."/>
            <person name="Sakakibara H."/>
        </authorList>
    </citation>
    <scope>SUBCELLULAR LOCATION</scope>
</reference>
<reference key="6">
    <citation type="journal article" date="2004" name="Plant J.">
        <title>Expression of cytokinin biosynthetic isopentenyltransferase genes in Arabidopsis: tissue specificity and regulation by auxin, cytokinin, and nitrate.</title>
        <authorList>
            <person name="Miyawaki K."/>
            <person name="Matsumoto-Kitano M."/>
            <person name="Kakimoto T."/>
        </authorList>
    </citation>
    <scope>TISSUE SPECIFICITY</scope>
    <scope>DEVELOPMENTAL STAGE</scope>
</reference>
<reference key="7">
    <citation type="journal article" date="2005" name="Proc. Natl. Acad. Sci. U.S.A.">
        <title>Agrobacterium tumefaciens increases cytokinin production in plastids by modifying the biosynthetic pathway in the host plant.</title>
        <authorList>
            <person name="Sakakibara H."/>
            <person name="Kasahara H."/>
            <person name="Ueda N."/>
            <person name="Kojima M."/>
            <person name="Takei K."/>
            <person name="Hishiyama S."/>
            <person name="Asami T."/>
            <person name="Okada K."/>
            <person name="Kamiya Y."/>
            <person name="Yamaya T."/>
            <person name="Yamaguchi S."/>
        </authorList>
    </citation>
    <scope>FUNCTION</scope>
</reference>
<reference key="8">
    <citation type="journal article" date="2006" name="Proc. Natl. Acad. Sci. U.S.A.">
        <title>Roles of Arabidopsis ATP/ADP isopentenyltransferases and tRNA isopentenyltransferases in cytokinin biosynthesis.</title>
        <authorList>
            <person name="Miyawaki K."/>
            <person name="Tarkowski P."/>
            <person name="Matsumoto-Kitano M."/>
            <person name="Kato T."/>
            <person name="Sato S."/>
            <person name="Tarkowska D."/>
            <person name="Tabata S."/>
            <person name="Sandberg G."/>
            <person name="Kakimoto T."/>
        </authorList>
    </citation>
    <scope>FUNCTION</scope>
    <scope>DISRUPTION PHENOTYPE</scope>
</reference>
<protein>
    <recommendedName>
        <fullName>Adenylate isopentenyltransferase 4</fullName>
        <shortName>AtIPT4</shortName>
        <ecNumber>2.5.1.112</ecNumber>
    </recommendedName>
    <alternativeName>
        <fullName>Adenylate dimethylallyltransferase 4</fullName>
    </alternativeName>
    <alternativeName>
        <fullName>Cytokinin synthase 4</fullName>
    </alternativeName>
</protein>
<keyword id="KW-0067">ATP-binding</keyword>
<keyword id="KW-0203">Cytokinin biosynthesis</keyword>
<keyword id="KW-0963">Cytoplasm</keyword>
<keyword id="KW-0547">Nucleotide-binding</keyword>
<keyword id="KW-1185">Reference proteome</keyword>
<keyword id="KW-0808">Transferase</keyword>
<proteinExistence type="evidence at protein level"/>
<feature type="chain" id="PRO_0000391069" description="Adenylate isopentenyltransferase 4">
    <location>
        <begin position="1"/>
        <end position="318"/>
    </location>
</feature>
<feature type="binding site" evidence="1">
    <location>
        <begin position="12"/>
        <end position="19"/>
    </location>
    <ligand>
        <name>ATP</name>
        <dbReference type="ChEBI" id="CHEBI:30616"/>
    </ligand>
</feature>
<accession>Q9SB60</accession>
<name>IPT4_ARATH</name>
<sequence>MKCNDKMVVIMGATGSGKSSLSVDLALHFKAEIINSDKMQFYDGLKITTNQSTIEDRRGVPHHLLGELNPEAGEVTAAEFRVMAAEAISEITQRKKLPILAGGSNSYIHALLAKSYDPENYPFSDHKGSICSELKYDCCFIWIDVDQSVLFEYLSLRLDLMMKSGMFEEIAEFHRSKKAPKEPLGIWKAIGVQEFDDYLKMYKWDNDMDKWDPMRKEAYEKAVRAIKENTFQLTKDQITKINKLRNAGWDIKKVDATASFREAIRAAKEGEGVAEMQRKIWNKEVLEPCVKIVRSHLDQPINYYYYYFYLLKRFLSLN</sequence>
<dbReference type="EC" id="2.5.1.112"/>
<dbReference type="EMBL" id="AB062611">
    <property type="protein sequence ID" value="BAB59044.1"/>
    <property type="molecule type" value="mRNA"/>
</dbReference>
<dbReference type="EMBL" id="AB061402">
    <property type="protein sequence ID" value="BAB59031.1"/>
    <property type="molecule type" value="mRNA"/>
</dbReference>
<dbReference type="EMBL" id="AL035356">
    <property type="protein sequence ID" value="CAA22998.1"/>
    <property type="molecule type" value="Genomic_DNA"/>
</dbReference>
<dbReference type="EMBL" id="AL161561">
    <property type="protein sequence ID" value="CAB79375.1"/>
    <property type="molecule type" value="Genomic_DNA"/>
</dbReference>
<dbReference type="EMBL" id="CP002687">
    <property type="protein sequence ID" value="AEE84938.1"/>
    <property type="molecule type" value="Genomic_DNA"/>
</dbReference>
<dbReference type="PIR" id="T05569">
    <property type="entry name" value="T05569"/>
</dbReference>
<dbReference type="RefSeq" id="NP_194196.1">
    <property type="nucleotide sequence ID" value="NM_118598.1"/>
</dbReference>
<dbReference type="SMR" id="Q9SB60"/>
<dbReference type="BioGRID" id="13856">
    <property type="interactions" value="1"/>
</dbReference>
<dbReference type="IntAct" id="Q9SB60">
    <property type="interactions" value="1"/>
</dbReference>
<dbReference type="STRING" id="3702.Q9SB60"/>
<dbReference type="PaxDb" id="3702-AT4G24650.1"/>
<dbReference type="EnsemblPlants" id="AT4G24650.1">
    <property type="protein sequence ID" value="AT4G24650.1"/>
    <property type="gene ID" value="AT4G24650"/>
</dbReference>
<dbReference type="GeneID" id="828567"/>
<dbReference type="Gramene" id="AT4G24650.1">
    <property type="protein sequence ID" value="AT4G24650.1"/>
    <property type="gene ID" value="AT4G24650"/>
</dbReference>
<dbReference type="KEGG" id="ath:AT4G24650"/>
<dbReference type="Araport" id="AT4G24650"/>
<dbReference type="TAIR" id="AT4G24650">
    <property type="gene designation" value="IPT4"/>
</dbReference>
<dbReference type="eggNOG" id="KOG1384">
    <property type="taxonomic scope" value="Eukaryota"/>
</dbReference>
<dbReference type="HOGENOM" id="CLU_032616_4_1_1"/>
<dbReference type="InParanoid" id="Q9SB60"/>
<dbReference type="OMA" id="RNAGWDI"/>
<dbReference type="PhylomeDB" id="Q9SB60"/>
<dbReference type="BioCyc" id="ARA:AT4G24650-MONOMER"/>
<dbReference type="BioCyc" id="MetaCyc:AT4G24650-MONOMER"/>
<dbReference type="BRENDA" id="2.5.1.112">
    <property type="organism ID" value="399"/>
</dbReference>
<dbReference type="SABIO-RK" id="Q9SB60"/>
<dbReference type="PRO" id="PR:Q9SB60"/>
<dbReference type="Proteomes" id="UP000006548">
    <property type="component" value="Chromosome 4"/>
</dbReference>
<dbReference type="ExpressionAtlas" id="Q9SB60">
    <property type="expression patterns" value="baseline and differential"/>
</dbReference>
<dbReference type="GO" id="GO:0005829">
    <property type="term" value="C:cytosol"/>
    <property type="evidence" value="ECO:0000314"/>
    <property type="project" value="UniProtKB"/>
</dbReference>
<dbReference type="GO" id="GO:0009824">
    <property type="term" value="F:AMP dimethylallyltransferase activity"/>
    <property type="evidence" value="ECO:0000315"/>
    <property type="project" value="TAIR"/>
</dbReference>
<dbReference type="GO" id="GO:0005524">
    <property type="term" value="F:ATP binding"/>
    <property type="evidence" value="ECO:0007669"/>
    <property type="project" value="UniProtKB-KW"/>
</dbReference>
<dbReference type="GO" id="GO:0052622">
    <property type="term" value="F:ATP/ADP dimethylallyltransferase activity"/>
    <property type="evidence" value="ECO:0000314"/>
    <property type="project" value="TAIR"/>
</dbReference>
<dbReference type="GO" id="GO:0052381">
    <property type="term" value="F:tRNA dimethylallyltransferase activity"/>
    <property type="evidence" value="ECO:0007669"/>
    <property type="project" value="InterPro"/>
</dbReference>
<dbReference type="GO" id="GO:0009691">
    <property type="term" value="P:cytokinin biosynthetic process"/>
    <property type="evidence" value="ECO:0000315"/>
    <property type="project" value="TAIR"/>
</dbReference>
<dbReference type="GO" id="GO:0008033">
    <property type="term" value="P:tRNA processing"/>
    <property type="evidence" value="ECO:0007669"/>
    <property type="project" value="InterPro"/>
</dbReference>
<dbReference type="FunFam" id="3.40.50.300:FF:001570">
    <property type="entry name" value="Adenylate isopentenyltransferase"/>
    <property type="match status" value="1"/>
</dbReference>
<dbReference type="Gene3D" id="1.10.287.890">
    <property type="entry name" value="Crystal structure of tRNA isopentenylpyrophosphate transferase (bh2366) domain"/>
    <property type="match status" value="1"/>
</dbReference>
<dbReference type="Gene3D" id="3.40.50.300">
    <property type="entry name" value="P-loop containing nucleotide triphosphate hydrolases"/>
    <property type="match status" value="1"/>
</dbReference>
<dbReference type="HAMAP" id="MF_00185">
    <property type="entry name" value="IPP_trans"/>
    <property type="match status" value="1"/>
</dbReference>
<dbReference type="InterPro" id="IPR039657">
    <property type="entry name" value="Dimethylallyltransferase"/>
</dbReference>
<dbReference type="InterPro" id="IPR018022">
    <property type="entry name" value="IPT"/>
</dbReference>
<dbReference type="InterPro" id="IPR027417">
    <property type="entry name" value="P-loop_NTPase"/>
</dbReference>
<dbReference type="PANTHER" id="PTHR11088:SF86">
    <property type="entry name" value="ADENYLATE ISOPENTENYLTRANSFERASE 4-RELATED"/>
    <property type="match status" value="1"/>
</dbReference>
<dbReference type="PANTHER" id="PTHR11088">
    <property type="entry name" value="TRNA DIMETHYLALLYLTRANSFERASE"/>
    <property type="match status" value="1"/>
</dbReference>
<dbReference type="Pfam" id="PF01715">
    <property type="entry name" value="IPPT"/>
    <property type="match status" value="2"/>
</dbReference>
<dbReference type="SUPFAM" id="SSF52540">
    <property type="entry name" value="P-loop containing nucleoside triphosphate hydrolases"/>
    <property type="match status" value="1"/>
</dbReference>